<gene>
    <name evidence="1" type="primary">dnaK</name>
    <name type="ordered locus">SF0014</name>
    <name type="ordered locus">S0014</name>
</gene>
<proteinExistence type="inferred from homology"/>
<evidence type="ECO:0000255" key="1">
    <source>
        <dbReference type="HAMAP-Rule" id="MF_00332"/>
    </source>
</evidence>
<evidence type="ECO:0000256" key="2">
    <source>
        <dbReference type="SAM" id="MobiDB-lite"/>
    </source>
</evidence>
<dbReference type="EMBL" id="AE005674">
    <property type="protein sequence ID" value="AAN41680.1"/>
    <property type="molecule type" value="Genomic_DNA"/>
</dbReference>
<dbReference type="EMBL" id="AE014073">
    <property type="protein sequence ID" value="AAP15560.1"/>
    <property type="molecule type" value="Genomic_DNA"/>
</dbReference>
<dbReference type="RefSeq" id="NP_705973.1">
    <property type="nucleotide sequence ID" value="NC_004337.2"/>
</dbReference>
<dbReference type="RefSeq" id="WP_000516121.1">
    <property type="nucleotide sequence ID" value="NZ_WPGW01000013.1"/>
</dbReference>
<dbReference type="SMR" id="Q83MH5"/>
<dbReference type="STRING" id="198214.SF0014"/>
<dbReference type="PaxDb" id="198214-SF0014"/>
<dbReference type="GeneID" id="1027578"/>
<dbReference type="KEGG" id="sfl:SF0014"/>
<dbReference type="KEGG" id="sfx:S0014"/>
<dbReference type="PATRIC" id="fig|198214.7.peg.13"/>
<dbReference type="HOGENOM" id="CLU_005965_2_1_6"/>
<dbReference type="Proteomes" id="UP000001006">
    <property type="component" value="Chromosome"/>
</dbReference>
<dbReference type="Proteomes" id="UP000002673">
    <property type="component" value="Chromosome"/>
</dbReference>
<dbReference type="GO" id="GO:0005524">
    <property type="term" value="F:ATP binding"/>
    <property type="evidence" value="ECO:0007669"/>
    <property type="project" value="UniProtKB-UniRule"/>
</dbReference>
<dbReference type="GO" id="GO:0140662">
    <property type="term" value="F:ATP-dependent protein folding chaperone"/>
    <property type="evidence" value="ECO:0007669"/>
    <property type="project" value="InterPro"/>
</dbReference>
<dbReference type="GO" id="GO:0051082">
    <property type="term" value="F:unfolded protein binding"/>
    <property type="evidence" value="ECO:0007669"/>
    <property type="project" value="InterPro"/>
</dbReference>
<dbReference type="CDD" id="cd10234">
    <property type="entry name" value="ASKHA_NBD_HSP70_DnaK-like"/>
    <property type="match status" value="1"/>
</dbReference>
<dbReference type="FunFam" id="2.60.34.10:FF:000014">
    <property type="entry name" value="Chaperone protein DnaK HSP70"/>
    <property type="match status" value="1"/>
</dbReference>
<dbReference type="FunFam" id="3.30.30.30:FF:000003">
    <property type="entry name" value="Heat shock protein 9"/>
    <property type="match status" value="1"/>
</dbReference>
<dbReference type="FunFam" id="1.20.1270.10:FF:000001">
    <property type="entry name" value="Molecular chaperone DnaK"/>
    <property type="match status" value="1"/>
</dbReference>
<dbReference type="FunFam" id="3.30.420.40:FF:000004">
    <property type="entry name" value="Molecular chaperone DnaK"/>
    <property type="match status" value="1"/>
</dbReference>
<dbReference type="FunFam" id="3.90.640.10:FF:000003">
    <property type="entry name" value="Molecular chaperone DnaK"/>
    <property type="match status" value="1"/>
</dbReference>
<dbReference type="Gene3D" id="1.20.1270.10">
    <property type="match status" value="1"/>
</dbReference>
<dbReference type="Gene3D" id="3.30.420.40">
    <property type="match status" value="2"/>
</dbReference>
<dbReference type="Gene3D" id="3.90.640.10">
    <property type="entry name" value="Actin, Chain A, domain 4"/>
    <property type="match status" value="1"/>
</dbReference>
<dbReference type="Gene3D" id="2.60.34.10">
    <property type="entry name" value="Substrate Binding Domain Of DNAk, Chain A, domain 1"/>
    <property type="match status" value="1"/>
</dbReference>
<dbReference type="HAMAP" id="MF_00332">
    <property type="entry name" value="DnaK"/>
    <property type="match status" value="1"/>
</dbReference>
<dbReference type="InterPro" id="IPR043129">
    <property type="entry name" value="ATPase_NBD"/>
</dbReference>
<dbReference type="InterPro" id="IPR012725">
    <property type="entry name" value="Chaperone_DnaK"/>
</dbReference>
<dbReference type="InterPro" id="IPR018181">
    <property type="entry name" value="Heat_shock_70_CS"/>
</dbReference>
<dbReference type="InterPro" id="IPR029048">
    <property type="entry name" value="HSP70_C_sf"/>
</dbReference>
<dbReference type="InterPro" id="IPR029047">
    <property type="entry name" value="HSP70_peptide-bd_sf"/>
</dbReference>
<dbReference type="InterPro" id="IPR013126">
    <property type="entry name" value="Hsp_70_fam"/>
</dbReference>
<dbReference type="NCBIfam" id="NF001413">
    <property type="entry name" value="PRK00290.1"/>
    <property type="match status" value="1"/>
</dbReference>
<dbReference type="NCBIfam" id="NF003520">
    <property type="entry name" value="PRK05183.1"/>
    <property type="match status" value="1"/>
</dbReference>
<dbReference type="NCBIfam" id="TIGR02350">
    <property type="entry name" value="prok_dnaK"/>
    <property type="match status" value="1"/>
</dbReference>
<dbReference type="PANTHER" id="PTHR19375">
    <property type="entry name" value="HEAT SHOCK PROTEIN 70KDA"/>
    <property type="match status" value="1"/>
</dbReference>
<dbReference type="Pfam" id="PF00012">
    <property type="entry name" value="HSP70"/>
    <property type="match status" value="1"/>
</dbReference>
<dbReference type="PRINTS" id="PR00301">
    <property type="entry name" value="HEATSHOCK70"/>
</dbReference>
<dbReference type="SUPFAM" id="SSF53067">
    <property type="entry name" value="Actin-like ATPase domain"/>
    <property type="match status" value="2"/>
</dbReference>
<dbReference type="SUPFAM" id="SSF100934">
    <property type="entry name" value="Heat shock protein 70kD (HSP70), C-terminal subdomain"/>
    <property type="match status" value="1"/>
</dbReference>
<dbReference type="SUPFAM" id="SSF100920">
    <property type="entry name" value="Heat shock protein 70kD (HSP70), peptide-binding domain"/>
    <property type="match status" value="1"/>
</dbReference>
<dbReference type="PROSITE" id="PS00297">
    <property type="entry name" value="HSP70_1"/>
    <property type="match status" value="1"/>
</dbReference>
<dbReference type="PROSITE" id="PS00329">
    <property type="entry name" value="HSP70_2"/>
    <property type="match status" value="1"/>
</dbReference>
<dbReference type="PROSITE" id="PS01036">
    <property type="entry name" value="HSP70_3"/>
    <property type="match status" value="1"/>
</dbReference>
<keyword id="KW-0007">Acetylation</keyword>
<keyword id="KW-0067">ATP-binding</keyword>
<keyword id="KW-0143">Chaperone</keyword>
<keyword id="KW-0547">Nucleotide-binding</keyword>
<keyword id="KW-0597">Phosphoprotein</keyword>
<keyword id="KW-1185">Reference proteome</keyword>
<keyword id="KW-0346">Stress response</keyword>
<name>DNAK_SHIFL</name>
<feature type="chain" id="PRO_0000078535" description="Chaperone protein DnaK">
    <location>
        <begin position="1"/>
        <end position="638"/>
    </location>
</feature>
<feature type="region of interest" description="Disordered" evidence="2">
    <location>
        <begin position="602"/>
        <end position="638"/>
    </location>
</feature>
<feature type="compositionally biased region" description="Low complexity" evidence="2">
    <location>
        <begin position="602"/>
        <end position="620"/>
    </location>
</feature>
<feature type="modified residue" description="N6-acetyllysine" evidence="1">
    <location>
        <position position="109"/>
    </location>
</feature>
<feature type="modified residue" description="Phosphothreonine; by autocatalysis" evidence="1">
    <location>
        <position position="199"/>
    </location>
</feature>
<feature type="modified residue" description="N6-acetyllysine" evidence="1">
    <location>
        <position position="245"/>
    </location>
</feature>
<feature type="modified residue" description="N6-acetyllysine" evidence="1">
    <location>
        <position position="304"/>
    </location>
</feature>
<feature type="modified residue" description="N6-acetyllysine" evidence="1">
    <location>
        <position position="421"/>
    </location>
</feature>
<feature type="modified residue" description="N6-acetyllysine" evidence="1">
    <location>
        <position position="556"/>
    </location>
</feature>
<comment type="function">
    <text evidence="1">Acts as a chaperone.</text>
</comment>
<comment type="induction">
    <text evidence="1">By stress conditions e.g. heat shock.</text>
</comment>
<comment type="similarity">
    <text evidence="1">Belongs to the heat shock protein 70 family.</text>
</comment>
<sequence length="638" mass="69127">MGKIIGIDLGTTNSCVAIMDGTIPRVLENAEGDRTTPSIIAYTQDGETLVGQPAKRQAVTNPQNTLFAIKRLIGRRFQDEEVQRDVSIMPFKIIAADNGDAWVEVKGQKMAPPQISAEVLKKMKKTAEDYLGEPVTEAVITVPAYFNDAQRQATKDAGRIAGLEVKRIINEPTAAALAYGLDKGTGNRTIAVYDLGGGTFDISIIEIDEVDGEKTFEVLATNGDTHLGGEDFDSRLINYLVEEFKKDQGIDLRNDPLAMQRLKEAAEKAKIELSSAQQTDVNLPYITADATGPKHMNIKVTRAKLESLVEDLVNRSIEPLKVALQDAGLSVSDIDDVILVGGQTRMPMVQKKVAEFFGKEPRKDVNPDEAVAIGAAVQGGVLTGDVKDVLLLDVTPLSLGIETMGGVMTTLIAKNTTIPTKHSQVFSTAEDNQSAVTIHVLQGERKRAADNKSLGQFNLDGINPAPRGMPQIEVTFDIDADGILHVSAKDKNSGKEQKITIKASSGLNEDEIQKMVRDAEANAEADRKFEELVQTRNQGDHLLHSTRKQVEEAGDKLPADDKTAIESALTALETALKGEDKAAIEAKMQELAQVSQKLMEIAQQQHAQQQTAGADASANNAKDDDVVDAEFEEVKDKK</sequence>
<accession>Q83MH5</accession>
<reference key="1">
    <citation type="journal article" date="2002" name="Nucleic Acids Res.">
        <title>Genome sequence of Shigella flexneri 2a: insights into pathogenicity through comparison with genomes of Escherichia coli K12 and O157.</title>
        <authorList>
            <person name="Jin Q."/>
            <person name="Yuan Z."/>
            <person name="Xu J."/>
            <person name="Wang Y."/>
            <person name="Shen Y."/>
            <person name="Lu W."/>
            <person name="Wang J."/>
            <person name="Liu H."/>
            <person name="Yang J."/>
            <person name="Yang F."/>
            <person name="Zhang X."/>
            <person name="Zhang J."/>
            <person name="Yang G."/>
            <person name="Wu H."/>
            <person name="Qu D."/>
            <person name="Dong J."/>
            <person name="Sun L."/>
            <person name="Xue Y."/>
            <person name="Zhao A."/>
            <person name="Gao Y."/>
            <person name="Zhu J."/>
            <person name="Kan B."/>
            <person name="Ding K."/>
            <person name="Chen S."/>
            <person name="Cheng H."/>
            <person name="Yao Z."/>
            <person name="He B."/>
            <person name="Chen R."/>
            <person name="Ma D."/>
            <person name="Qiang B."/>
            <person name="Wen Y."/>
            <person name="Hou Y."/>
            <person name="Yu J."/>
        </authorList>
    </citation>
    <scope>NUCLEOTIDE SEQUENCE [LARGE SCALE GENOMIC DNA]</scope>
    <source>
        <strain>301 / Serotype 2a</strain>
    </source>
</reference>
<reference key="2">
    <citation type="journal article" date="2003" name="Infect. Immun.">
        <title>Complete genome sequence and comparative genomics of Shigella flexneri serotype 2a strain 2457T.</title>
        <authorList>
            <person name="Wei J."/>
            <person name="Goldberg M.B."/>
            <person name="Burland V."/>
            <person name="Venkatesan M.M."/>
            <person name="Deng W."/>
            <person name="Fournier G."/>
            <person name="Mayhew G.F."/>
            <person name="Plunkett G. III"/>
            <person name="Rose D.J."/>
            <person name="Darling A."/>
            <person name="Mau B."/>
            <person name="Perna N.T."/>
            <person name="Payne S.M."/>
            <person name="Runyen-Janecky L.J."/>
            <person name="Zhou S."/>
            <person name="Schwartz D.C."/>
            <person name="Blattner F.R."/>
        </authorList>
    </citation>
    <scope>NUCLEOTIDE SEQUENCE [LARGE SCALE GENOMIC DNA]</scope>
    <source>
        <strain>ATCC 700930 / 2457T / Serotype 2a</strain>
    </source>
</reference>
<organism>
    <name type="scientific">Shigella flexneri</name>
    <dbReference type="NCBI Taxonomy" id="623"/>
    <lineage>
        <taxon>Bacteria</taxon>
        <taxon>Pseudomonadati</taxon>
        <taxon>Pseudomonadota</taxon>
        <taxon>Gammaproteobacteria</taxon>
        <taxon>Enterobacterales</taxon>
        <taxon>Enterobacteriaceae</taxon>
        <taxon>Shigella</taxon>
    </lineage>
</organism>
<protein>
    <recommendedName>
        <fullName evidence="1">Chaperone protein DnaK</fullName>
    </recommendedName>
    <alternativeName>
        <fullName evidence="1">HSP70</fullName>
    </alternativeName>
    <alternativeName>
        <fullName evidence="1">Heat shock 70 kDa protein</fullName>
    </alternativeName>
    <alternativeName>
        <fullName evidence="1">Heat shock protein 70</fullName>
    </alternativeName>
</protein>